<comment type="function">
    <text evidence="1">Involved in the gluconeogenesis. Catalyzes stereospecifically the conversion of dihydroxyacetone phosphate (DHAP) to D-glyceraldehyde-3-phosphate (G3P).</text>
</comment>
<comment type="catalytic activity">
    <reaction evidence="1">
        <text>D-glyceraldehyde 3-phosphate = dihydroxyacetone phosphate</text>
        <dbReference type="Rhea" id="RHEA:18585"/>
        <dbReference type="ChEBI" id="CHEBI:57642"/>
        <dbReference type="ChEBI" id="CHEBI:59776"/>
        <dbReference type="EC" id="5.3.1.1"/>
    </reaction>
</comment>
<comment type="pathway">
    <text evidence="1">Carbohydrate biosynthesis; gluconeogenesis.</text>
</comment>
<comment type="pathway">
    <text evidence="1">Carbohydrate degradation; glycolysis; D-glyceraldehyde 3-phosphate from glycerone phosphate: step 1/1.</text>
</comment>
<comment type="subunit">
    <text evidence="1">Homodimer.</text>
</comment>
<comment type="subcellular location">
    <subcellularLocation>
        <location evidence="1">Cytoplasm</location>
    </subcellularLocation>
</comment>
<comment type="similarity">
    <text evidence="1">Belongs to the triosephosphate isomerase family.</text>
</comment>
<accession>B1AIG9</accession>
<sequence length="238" mass="26978">MKYIIANFKMNATQELINHFLNNLTLFDEQKIIIGLAPGDLYLKTFVNLAEIKKVNLYAQNPSLHNKGPYTGQISCLQLLDINIKNALVGHSEIRIDFSQSIIDQKIKISMDLLEQVIICVGETFDAYKQNKSLNFVLNQLANIINYKGLKKIIIAYEPIWAIGTDLELDFKHINYMIEGIKTYLYNCTGINIPILYGGSVNDNNINELCNQKLIDGFLIGNASLDVNVFNKIIDKCK</sequence>
<dbReference type="EC" id="5.3.1.1" evidence="1"/>
<dbReference type="EMBL" id="CP000942">
    <property type="protein sequence ID" value="ACA32814.1"/>
    <property type="molecule type" value="Genomic_DNA"/>
</dbReference>
<dbReference type="RefSeq" id="WP_006688831.1">
    <property type="nucleotide sequence ID" value="NC_010503.1"/>
</dbReference>
<dbReference type="SMR" id="B1AIG9"/>
<dbReference type="GeneID" id="29672714"/>
<dbReference type="KEGG" id="upa:UPA3_0188"/>
<dbReference type="HOGENOM" id="CLU_024251_2_3_14"/>
<dbReference type="UniPathway" id="UPA00109">
    <property type="reaction ID" value="UER00189"/>
</dbReference>
<dbReference type="UniPathway" id="UPA00138"/>
<dbReference type="Proteomes" id="UP000002162">
    <property type="component" value="Chromosome"/>
</dbReference>
<dbReference type="GO" id="GO:0005829">
    <property type="term" value="C:cytosol"/>
    <property type="evidence" value="ECO:0007669"/>
    <property type="project" value="TreeGrafter"/>
</dbReference>
<dbReference type="GO" id="GO:0004807">
    <property type="term" value="F:triose-phosphate isomerase activity"/>
    <property type="evidence" value="ECO:0007669"/>
    <property type="project" value="UniProtKB-UniRule"/>
</dbReference>
<dbReference type="GO" id="GO:0006094">
    <property type="term" value="P:gluconeogenesis"/>
    <property type="evidence" value="ECO:0007669"/>
    <property type="project" value="UniProtKB-UniRule"/>
</dbReference>
<dbReference type="GO" id="GO:0046166">
    <property type="term" value="P:glyceraldehyde-3-phosphate biosynthetic process"/>
    <property type="evidence" value="ECO:0007669"/>
    <property type="project" value="TreeGrafter"/>
</dbReference>
<dbReference type="GO" id="GO:0019563">
    <property type="term" value="P:glycerol catabolic process"/>
    <property type="evidence" value="ECO:0007669"/>
    <property type="project" value="TreeGrafter"/>
</dbReference>
<dbReference type="GO" id="GO:0006096">
    <property type="term" value="P:glycolytic process"/>
    <property type="evidence" value="ECO:0007669"/>
    <property type="project" value="UniProtKB-UniRule"/>
</dbReference>
<dbReference type="CDD" id="cd00311">
    <property type="entry name" value="TIM"/>
    <property type="match status" value="1"/>
</dbReference>
<dbReference type="Gene3D" id="3.20.20.70">
    <property type="entry name" value="Aldolase class I"/>
    <property type="match status" value="1"/>
</dbReference>
<dbReference type="HAMAP" id="MF_00147_B">
    <property type="entry name" value="TIM_B"/>
    <property type="match status" value="1"/>
</dbReference>
<dbReference type="InterPro" id="IPR013785">
    <property type="entry name" value="Aldolase_TIM"/>
</dbReference>
<dbReference type="InterPro" id="IPR035990">
    <property type="entry name" value="TIM_sf"/>
</dbReference>
<dbReference type="InterPro" id="IPR022896">
    <property type="entry name" value="TrioseP_Isoase_bac/euk"/>
</dbReference>
<dbReference type="InterPro" id="IPR000652">
    <property type="entry name" value="Triosephosphate_isomerase"/>
</dbReference>
<dbReference type="PANTHER" id="PTHR21139">
    <property type="entry name" value="TRIOSEPHOSPHATE ISOMERASE"/>
    <property type="match status" value="1"/>
</dbReference>
<dbReference type="PANTHER" id="PTHR21139:SF42">
    <property type="entry name" value="TRIOSEPHOSPHATE ISOMERASE"/>
    <property type="match status" value="1"/>
</dbReference>
<dbReference type="Pfam" id="PF00121">
    <property type="entry name" value="TIM"/>
    <property type="match status" value="1"/>
</dbReference>
<dbReference type="SUPFAM" id="SSF51351">
    <property type="entry name" value="Triosephosphate isomerase (TIM)"/>
    <property type="match status" value="1"/>
</dbReference>
<dbReference type="PROSITE" id="PS00171">
    <property type="entry name" value="TIM_1"/>
    <property type="match status" value="1"/>
</dbReference>
<dbReference type="PROSITE" id="PS51440">
    <property type="entry name" value="TIM_2"/>
    <property type="match status" value="1"/>
</dbReference>
<evidence type="ECO:0000255" key="1">
    <source>
        <dbReference type="HAMAP-Rule" id="MF_00147"/>
    </source>
</evidence>
<proteinExistence type="inferred from homology"/>
<name>TPIS_UREP2</name>
<keyword id="KW-0963">Cytoplasm</keyword>
<keyword id="KW-0312">Gluconeogenesis</keyword>
<keyword id="KW-0324">Glycolysis</keyword>
<keyword id="KW-0413">Isomerase</keyword>
<feature type="chain" id="PRO_1000076667" description="Triosephosphate isomerase">
    <location>
        <begin position="1"/>
        <end position="238"/>
    </location>
</feature>
<feature type="active site" description="Electrophile" evidence="1">
    <location>
        <position position="91"/>
    </location>
</feature>
<feature type="active site" description="Proton acceptor" evidence="1">
    <location>
        <position position="158"/>
    </location>
</feature>
<feature type="binding site" evidence="1">
    <location>
        <begin position="7"/>
        <end position="9"/>
    </location>
    <ligand>
        <name>substrate</name>
    </ligand>
</feature>
<feature type="binding site" evidence="1">
    <location>
        <position position="164"/>
    </location>
    <ligand>
        <name>substrate</name>
    </ligand>
</feature>
<feature type="binding site" evidence="1">
    <location>
        <position position="200"/>
    </location>
    <ligand>
        <name>substrate</name>
    </ligand>
</feature>
<gene>
    <name evidence="1" type="primary">tpiA</name>
    <name type="ordered locus">UPA3_0188</name>
</gene>
<protein>
    <recommendedName>
        <fullName evidence="1">Triosephosphate isomerase</fullName>
        <shortName evidence="1">TIM</shortName>
        <shortName evidence="1">TPI</shortName>
        <ecNumber evidence="1">5.3.1.1</ecNumber>
    </recommendedName>
    <alternativeName>
        <fullName evidence="1">Triose-phosphate isomerase</fullName>
    </alternativeName>
</protein>
<reference key="1">
    <citation type="submission" date="2008-02" db="EMBL/GenBank/DDBJ databases">
        <title>Genome sequence of Ureaplasma parvum serovar 3.</title>
        <authorList>
            <person name="Methe B.A."/>
            <person name="Glass J."/>
            <person name="Waites K."/>
            <person name="Shrivastava S."/>
        </authorList>
    </citation>
    <scope>NUCLEOTIDE SEQUENCE [LARGE SCALE GENOMIC DNA]</scope>
    <source>
        <strain>ATCC 27815 / 27 / NCTC 11736</strain>
    </source>
</reference>
<organism>
    <name type="scientific">Ureaplasma parvum serovar 3 (strain ATCC 27815 / 27 / NCTC 11736)</name>
    <dbReference type="NCBI Taxonomy" id="505682"/>
    <lineage>
        <taxon>Bacteria</taxon>
        <taxon>Bacillati</taxon>
        <taxon>Mycoplasmatota</taxon>
        <taxon>Mycoplasmoidales</taxon>
        <taxon>Mycoplasmoidaceae</taxon>
        <taxon>Ureaplasma</taxon>
    </lineage>
</organism>